<keyword id="KW-0007">Acetylation</keyword>
<keyword id="KW-0037">Angiogenesis</keyword>
<keyword id="KW-0175">Coiled coil</keyword>
<keyword id="KW-0963">Cytoplasm</keyword>
<keyword id="KW-0217">Developmental protein</keyword>
<keyword id="KW-0221">Differentiation</keyword>
<keyword id="KW-0597">Phosphoprotein</keyword>
<keyword id="KW-1185">Reference proteome</keyword>
<keyword id="KW-0964">Secreted</keyword>
<proteinExistence type="evidence at transcript level"/>
<organism>
    <name type="scientific">Mus musculus</name>
    <name type="common">Mouse</name>
    <dbReference type="NCBI Taxonomy" id="10090"/>
    <lineage>
        <taxon>Eukaryota</taxon>
        <taxon>Metazoa</taxon>
        <taxon>Chordata</taxon>
        <taxon>Craniata</taxon>
        <taxon>Vertebrata</taxon>
        <taxon>Euteleostomi</taxon>
        <taxon>Mammalia</taxon>
        <taxon>Eutheria</taxon>
        <taxon>Euarchontoglires</taxon>
        <taxon>Glires</taxon>
        <taxon>Rodentia</taxon>
        <taxon>Myomorpha</taxon>
        <taxon>Muroidea</taxon>
        <taxon>Muridae</taxon>
        <taxon>Murinae</taxon>
        <taxon>Mus</taxon>
        <taxon>Mus</taxon>
    </lineage>
</organism>
<evidence type="ECO:0000250" key="1"/>
<evidence type="ECO:0000250" key="2">
    <source>
        <dbReference type="UniProtKB" id="Q8N302"/>
    </source>
</evidence>
<evidence type="ECO:0000255" key="3"/>
<evidence type="ECO:0000255" key="4">
    <source>
        <dbReference type="PROSITE-ProRule" id="PRU00086"/>
    </source>
</evidence>
<evidence type="ECO:0000255" key="5">
    <source>
        <dbReference type="PROSITE-ProRule" id="PRU00092"/>
    </source>
</evidence>
<evidence type="ECO:0000256" key="6">
    <source>
        <dbReference type="SAM" id="MobiDB-lite"/>
    </source>
</evidence>
<evidence type="ECO:0000305" key="7"/>
<reference key="1">
    <citation type="journal article" date="2004" name="Nature">
        <title>Identification of an angiogenic factor that when mutated causes susceptibility to Klippel-Trenaunay syndrome.</title>
        <authorList>
            <person name="Tian X.-L."/>
            <person name="Kadaba R."/>
            <person name="You S.-A."/>
            <person name="Liu M."/>
            <person name="Timur A.A."/>
            <person name="Yang L."/>
            <person name="Chen Q."/>
            <person name="Szafranski P."/>
            <person name="Rao S."/>
            <person name="Wu L."/>
            <person name="Housman D.E."/>
            <person name="DiCorleto P.E."/>
            <person name="Driscoll D.J."/>
            <person name="Borrow J."/>
            <person name="Wang Q."/>
        </authorList>
    </citation>
    <scope>NUCLEOTIDE SEQUENCE [MRNA]</scope>
</reference>
<reference key="2">
    <citation type="journal article" date="2005" name="Science">
        <title>The transcriptional landscape of the mammalian genome.</title>
        <authorList>
            <person name="Carninci P."/>
            <person name="Kasukawa T."/>
            <person name="Katayama S."/>
            <person name="Gough J."/>
            <person name="Frith M.C."/>
            <person name="Maeda N."/>
            <person name="Oyama R."/>
            <person name="Ravasi T."/>
            <person name="Lenhard B."/>
            <person name="Wells C."/>
            <person name="Kodzius R."/>
            <person name="Shimokawa K."/>
            <person name="Bajic V.B."/>
            <person name="Brenner S.E."/>
            <person name="Batalov S."/>
            <person name="Forrest A.R."/>
            <person name="Zavolan M."/>
            <person name="Davis M.J."/>
            <person name="Wilming L.G."/>
            <person name="Aidinis V."/>
            <person name="Allen J.E."/>
            <person name="Ambesi-Impiombato A."/>
            <person name="Apweiler R."/>
            <person name="Aturaliya R.N."/>
            <person name="Bailey T.L."/>
            <person name="Bansal M."/>
            <person name="Baxter L."/>
            <person name="Beisel K.W."/>
            <person name="Bersano T."/>
            <person name="Bono H."/>
            <person name="Chalk A.M."/>
            <person name="Chiu K.P."/>
            <person name="Choudhary V."/>
            <person name="Christoffels A."/>
            <person name="Clutterbuck D.R."/>
            <person name="Crowe M.L."/>
            <person name="Dalla E."/>
            <person name="Dalrymple B.P."/>
            <person name="de Bono B."/>
            <person name="Della Gatta G."/>
            <person name="di Bernardo D."/>
            <person name="Down T."/>
            <person name="Engstrom P."/>
            <person name="Fagiolini M."/>
            <person name="Faulkner G."/>
            <person name="Fletcher C.F."/>
            <person name="Fukushima T."/>
            <person name="Furuno M."/>
            <person name="Futaki S."/>
            <person name="Gariboldi M."/>
            <person name="Georgii-Hemming P."/>
            <person name="Gingeras T.R."/>
            <person name="Gojobori T."/>
            <person name="Green R.E."/>
            <person name="Gustincich S."/>
            <person name="Harbers M."/>
            <person name="Hayashi Y."/>
            <person name="Hensch T.K."/>
            <person name="Hirokawa N."/>
            <person name="Hill D."/>
            <person name="Huminiecki L."/>
            <person name="Iacono M."/>
            <person name="Ikeo K."/>
            <person name="Iwama A."/>
            <person name="Ishikawa T."/>
            <person name="Jakt M."/>
            <person name="Kanapin A."/>
            <person name="Katoh M."/>
            <person name="Kawasawa Y."/>
            <person name="Kelso J."/>
            <person name="Kitamura H."/>
            <person name="Kitano H."/>
            <person name="Kollias G."/>
            <person name="Krishnan S.P."/>
            <person name="Kruger A."/>
            <person name="Kummerfeld S.K."/>
            <person name="Kurochkin I.V."/>
            <person name="Lareau L.F."/>
            <person name="Lazarevic D."/>
            <person name="Lipovich L."/>
            <person name="Liu J."/>
            <person name="Liuni S."/>
            <person name="McWilliam S."/>
            <person name="Madan Babu M."/>
            <person name="Madera M."/>
            <person name="Marchionni L."/>
            <person name="Matsuda H."/>
            <person name="Matsuzawa S."/>
            <person name="Miki H."/>
            <person name="Mignone F."/>
            <person name="Miyake S."/>
            <person name="Morris K."/>
            <person name="Mottagui-Tabar S."/>
            <person name="Mulder N."/>
            <person name="Nakano N."/>
            <person name="Nakauchi H."/>
            <person name="Ng P."/>
            <person name="Nilsson R."/>
            <person name="Nishiguchi S."/>
            <person name="Nishikawa S."/>
            <person name="Nori F."/>
            <person name="Ohara O."/>
            <person name="Okazaki Y."/>
            <person name="Orlando V."/>
            <person name="Pang K.C."/>
            <person name="Pavan W.J."/>
            <person name="Pavesi G."/>
            <person name="Pesole G."/>
            <person name="Petrovsky N."/>
            <person name="Piazza S."/>
            <person name="Reed J."/>
            <person name="Reid J.F."/>
            <person name="Ring B.Z."/>
            <person name="Ringwald M."/>
            <person name="Rost B."/>
            <person name="Ruan Y."/>
            <person name="Salzberg S.L."/>
            <person name="Sandelin A."/>
            <person name="Schneider C."/>
            <person name="Schoenbach C."/>
            <person name="Sekiguchi K."/>
            <person name="Semple C.A."/>
            <person name="Seno S."/>
            <person name="Sessa L."/>
            <person name="Sheng Y."/>
            <person name="Shibata Y."/>
            <person name="Shimada H."/>
            <person name="Shimada K."/>
            <person name="Silva D."/>
            <person name="Sinclair B."/>
            <person name="Sperling S."/>
            <person name="Stupka E."/>
            <person name="Sugiura K."/>
            <person name="Sultana R."/>
            <person name="Takenaka Y."/>
            <person name="Taki K."/>
            <person name="Tammoja K."/>
            <person name="Tan S.L."/>
            <person name="Tang S."/>
            <person name="Taylor M.S."/>
            <person name="Tegner J."/>
            <person name="Teichmann S.A."/>
            <person name="Ueda H.R."/>
            <person name="van Nimwegen E."/>
            <person name="Verardo R."/>
            <person name="Wei C.L."/>
            <person name="Yagi K."/>
            <person name="Yamanishi H."/>
            <person name="Zabarovsky E."/>
            <person name="Zhu S."/>
            <person name="Zimmer A."/>
            <person name="Hide W."/>
            <person name="Bult C."/>
            <person name="Grimmond S.M."/>
            <person name="Teasdale R.D."/>
            <person name="Liu E.T."/>
            <person name="Brusic V."/>
            <person name="Quackenbush J."/>
            <person name="Wahlestedt C."/>
            <person name="Mattick J.S."/>
            <person name="Hume D.A."/>
            <person name="Kai C."/>
            <person name="Sasaki D."/>
            <person name="Tomaru Y."/>
            <person name="Fukuda S."/>
            <person name="Kanamori-Katayama M."/>
            <person name="Suzuki M."/>
            <person name="Aoki J."/>
            <person name="Arakawa T."/>
            <person name="Iida J."/>
            <person name="Imamura K."/>
            <person name="Itoh M."/>
            <person name="Kato T."/>
            <person name="Kawaji H."/>
            <person name="Kawagashira N."/>
            <person name="Kawashima T."/>
            <person name="Kojima M."/>
            <person name="Kondo S."/>
            <person name="Konno H."/>
            <person name="Nakano K."/>
            <person name="Ninomiya N."/>
            <person name="Nishio T."/>
            <person name="Okada M."/>
            <person name="Plessy C."/>
            <person name="Shibata K."/>
            <person name="Shiraki T."/>
            <person name="Suzuki S."/>
            <person name="Tagami M."/>
            <person name="Waki K."/>
            <person name="Watahiki A."/>
            <person name="Okamura-Oho Y."/>
            <person name="Suzuki H."/>
            <person name="Kawai J."/>
            <person name="Hayashizaki Y."/>
        </authorList>
    </citation>
    <scope>NUCLEOTIDE SEQUENCE [LARGE SCALE MRNA]</scope>
    <source>
        <strain>C57BL/6J</strain>
        <tissue>Head</tissue>
        <tissue>Small intestine</tissue>
        <tissue>Tongue</tissue>
    </source>
</reference>
<reference key="3">
    <citation type="journal article" date="2004" name="Genome Res.">
        <title>The status, quality, and expansion of the NIH full-length cDNA project: the Mammalian Gene Collection (MGC).</title>
        <authorList>
            <consortium name="The MGC Project Team"/>
        </authorList>
    </citation>
    <scope>NUCLEOTIDE SEQUENCE [LARGE SCALE MRNA]</scope>
    <source>
        <strain>C57BL/6J</strain>
        <tissue>Embryonic brain</tissue>
        <tissue>Mammary tumor</tissue>
    </source>
</reference>
<dbReference type="EMBL" id="AY500995">
    <property type="protein sequence ID" value="AAR97616.1"/>
    <property type="molecule type" value="mRNA"/>
</dbReference>
<dbReference type="EMBL" id="AK008168">
    <property type="protein sequence ID" value="BAB25506.3"/>
    <property type="molecule type" value="mRNA"/>
</dbReference>
<dbReference type="EMBL" id="AK008399">
    <property type="protein sequence ID" value="BAB25648.3"/>
    <property type="molecule type" value="mRNA"/>
</dbReference>
<dbReference type="EMBL" id="AK009533">
    <property type="status" value="NOT_ANNOTATED_CDS"/>
    <property type="molecule type" value="mRNA"/>
</dbReference>
<dbReference type="EMBL" id="AK017248">
    <property type="status" value="NOT_ANNOTATED_CDS"/>
    <property type="molecule type" value="mRNA"/>
</dbReference>
<dbReference type="EMBL" id="BC027286">
    <property type="protein sequence ID" value="AAH27286.1"/>
    <property type="status" value="ALT_INIT"/>
    <property type="molecule type" value="mRNA"/>
</dbReference>
<dbReference type="EMBL" id="BC052410">
    <property type="protein sequence ID" value="AAH52410.1"/>
    <property type="molecule type" value="mRNA"/>
</dbReference>
<dbReference type="CCDS" id="CCDS26697.1"/>
<dbReference type="RefSeq" id="NP_079906.2">
    <property type="nucleotide sequence ID" value="NM_025630.3"/>
</dbReference>
<dbReference type="SMR" id="Q7TN31"/>
<dbReference type="BioGRID" id="211550">
    <property type="interactions" value="2"/>
</dbReference>
<dbReference type="FunCoup" id="Q7TN31">
    <property type="interactions" value="1696"/>
</dbReference>
<dbReference type="STRING" id="10090.ENSMUSP00000022189"/>
<dbReference type="iPTMnet" id="Q7TN31"/>
<dbReference type="PhosphoSitePlus" id="Q7TN31"/>
<dbReference type="PaxDb" id="10090-ENSMUSP00000022189"/>
<dbReference type="ProteomicsDB" id="296082"/>
<dbReference type="Ensembl" id="ENSMUST00000022189.9">
    <property type="protein sequence ID" value="ENSMUSP00000022189.9"/>
    <property type="gene ID" value="ENSMUSG00000021681.9"/>
</dbReference>
<dbReference type="GeneID" id="66549"/>
<dbReference type="KEGG" id="mmu:66549"/>
<dbReference type="UCSC" id="uc007rmi.2">
    <property type="organism name" value="mouse"/>
</dbReference>
<dbReference type="AGR" id="MGI:1913799"/>
<dbReference type="CTD" id="55109"/>
<dbReference type="MGI" id="MGI:1913799">
    <property type="gene designation" value="Aggf1"/>
</dbReference>
<dbReference type="VEuPathDB" id="HostDB:ENSMUSG00000021681"/>
<dbReference type="eggNOG" id="KOG0154">
    <property type="taxonomic scope" value="Eukaryota"/>
</dbReference>
<dbReference type="GeneTree" id="ENSGT00730000111121"/>
<dbReference type="HOGENOM" id="CLU_023817_1_0_1"/>
<dbReference type="InParanoid" id="Q7TN31"/>
<dbReference type="OMA" id="QLHKTHA"/>
<dbReference type="OrthoDB" id="2538319at2759"/>
<dbReference type="PhylomeDB" id="Q7TN31"/>
<dbReference type="TreeFam" id="TF315789"/>
<dbReference type="BioGRID-ORCS" id="66549">
    <property type="hits" value="2 hits in 75 CRISPR screens"/>
</dbReference>
<dbReference type="ChiTaRS" id="Aggf1">
    <property type="organism name" value="mouse"/>
</dbReference>
<dbReference type="PRO" id="PR:Q7TN31"/>
<dbReference type="Proteomes" id="UP000000589">
    <property type="component" value="Chromosome 13"/>
</dbReference>
<dbReference type="RNAct" id="Q7TN31">
    <property type="molecule type" value="protein"/>
</dbReference>
<dbReference type="Bgee" id="ENSMUSG00000021681">
    <property type="expression patterns" value="Expressed in cleaving embryo and 260 other cell types or tissues"/>
</dbReference>
<dbReference type="GO" id="GO:0005737">
    <property type="term" value="C:cytoplasm"/>
    <property type="evidence" value="ECO:0000250"/>
    <property type="project" value="UniProtKB"/>
</dbReference>
<dbReference type="GO" id="GO:0005576">
    <property type="term" value="C:extracellular region"/>
    <property type="evidence" value="ECO:0000250"/>
    <property type="project" value="UniProtKB"/>
</dbReference>
<dbReference type="GO" id="GO:0048471">
    <property type="term" value="C:perinuclear region of cytoplasm"/>
    <property type="evidence" value="ECO:0000250"/>
    <property type="project" value="UniProtKB"/>
</dbReference>
<dbReference type="GO" id="GO:0042802">
    <property type="term" value="F:identical protein binding"/>
    <property type="evidence" value="ECO:0007669"/>
    <property type="project" value="Ensembl"/>
</dbReference>
<dbReference type="GO" id="GO:0003676">
    <property type="term" value="F:nucleic acid binding"/>
    <property type="evidence" value="ECO:0007669"/>
    <property type="project" value="InterPro"/>
</dbReference>
<dbReference type="GO" id="GO:0001525">
    <property type="term" value="P:angiogenesis"/>
    <property type="evidence" value="ECO:0007669"/>
    <property type="project" value="UniProtKB-KW"/>
</dbReference>
<dbReference type="GO" id="GO:0007155">
    <property type="term" value="P:cell adhesion"/>
    <property type="evidence" value="ECO:0000250"/>
    <property type="project" value="UniProtKB"/>
</dbReference>
<dbReference type="GO" id="GO:0030154">
    <property type="term" value="P:cell differentiation"/>
    <property type="evidence" value="ECO:0007669"/>
    <property type="project" value="UniProtKB-KW"/>
</dbReference>
<dbReference type="GO" id="GO:0045766">
    <property type="term" value="P:positive regulation of angiogenesis"/>
    <property type="evidence" value="ECO:0000250"/>
    <property type="project" value="UniProtKB"/>
</dbReference>
<dbReference type="GO" id="GO:0001938">
    <property type="term" value="P:positive regulation of endothelial cell proliferation"/>
    <property type="evidence" value="ECO:0000250"/>
    <property type="project" value="UniProtKB"/>
</dbReference>
<dbReference type="CDD" id="cd22686">
    <property type="entry name" value="FHA_AGGF1"/>
    <property type="match status" value="1"/>
</dbReference>
<dbReference type="CDD" id="cd16164">
    <property type="entry name" value="OCRE_VG5Q"/>
    <property type="match status" value="1"/>
</dbReference>
<dbReference type="FunFam" id="2.60.200.20:FF:000016">
    <property type="entry name" value="Angiogenic factor with G patch and FHA domains 1"/>
    <property type="match status" value="1"/>
</dbReference>
<dbReference type="Gene3D" id="2.60.200.20">
    <property type="match status" value="1"/>
</dbReference>
<dbReference type="InterPro" id="IPR053027">
    <property type="entry name" value="AGGF1"/>
</dbReference>
<dbReference type="InterPro" id="IPR035624">
    <property type="entry name" value="AGGF1_OCRE"/>
</dbReference>
<dbReference type="InterPro" id="IPR000253">
    <property type="entry name" value="FHA_dom"/>
</dbReference>
<dbReference type="InterPro" id="IPR000467">
    <property type="entry name" value="G_patch_dom"/>
</dbReference>
<dbReference type="InterPro" id="IPR041591">
    <property type="entry name" value="OCRE"/>
</dbReference>
<dbReference type="InterPro" id="IPR008984">
    <property type="entry name" value="SMAD_FHA_dom_sf"/>
</dbReference>
<dbReference type="PANTHER" id="PTHR23106">
    <property type="entry name" value="ANGIOGENIC FACTOR WITH G PATCH AND FHA DOMAINS 1"/>
    <property type="match status" value="1"/>
</dbReference>
<dbReference type="PANTHER" id="PTHR23106:SF24">
    <property type="entry name" value="ANGIOGENIC FACTOR WITH G PATCH AND FHA DOMAINS 1"/>
    <property type="match status" value="1"/>
</dbReference>
<dbReference type="Pfam" id="PF00498">
    <property type="entry name" value="FHA"/>
    <property type="match status" value="1"/>
</dbReference>
<dbReference type="Pfam" id="PF01585">
    <property type="entry name" value="G-patch"/>
    <property type="match status" value="1"/>
</dbReference>
<dbReference type="Pfam" id="PF17780">
    <property type="entry name" value="OCRE"/>
    <property type="match status" value="1"/>
</dbReference>
<dbReference type="SMART" id="SM00240">
    <property type="entry name" value="FHA"/>
    <property type="match status" value="1"/>
</dbReference>
<dbReference type="SMART" id="SM00443">
    <property type="entry name" value="G_patch"/>
    <property type="match status" value="1"/>
</dbReference>
<dbReference type="SUPFAM" id="SSF49879">
    <property type="entry name" value="SMAD/FHA domain"/>
    <property type="match status" value="1"/>
</dbReference>
<dbReference type="PROSITE" id="PS50006">
    <property type="entry name" value="FHA_DOMAIN"/>
    <property type="match status" value="1"/>
</dbReference>
<dbReference type="PROSITE" id="PS50174">
    <property type="entry name" value="G_PATCH"/>
    <property type="match status" value="1"/>
</dbReference>
<comment type="function">
    <text evidence="1">Promotes angiogenesis and the proliferation of endothelial cells. Able to bind to endothelial cells and promote cell proliferation, suggesting that it may act in an autocrine fashion (By similarity).</text>
</comment>
<comment type="subunit">
    <text evidence="1">Interacts with the secreted angiogenic factor TNFSF12.</text>
</comment>
<comment type="subcellular location">
    <subcellularLocation>
        <location evidence="1">Cytoplasm</location>
    </subcellularLocation>
    <subcellularLocation>
        <location evidence="1">Secreted</location>
    </subcellularLocation>
    <text evidence="1">Cytoplasmic in microvascular endothelial cells. Upon angiogenesis, when endothelial cell tube formation is initiated, it is secreted (By similarity).</text>
</comment>
<comment type="sequence caution" evidence="7">
    <conflict type="erroneous initiation">
        <sequence resource="EMBL-CDS" id="AAH27286"/>
    </conflict>
</comment>
<comment type="sequence caution" evidence="7">
    <conflict type="frameshift">
        <sequence resource="EMBL" id="AK009533"/>
    </conflict>
</comment>
<comment type="sequence caution" evidence="7">
    <conflict type="frameshift">
        <sequence resource="EMBL" id="AK017248"/>
    </conflict>
</comment>
<protein>
    <recommendedName>
        <fullName>Angiogenic factor with G patch and FHA domains 1</fullName>
    </recommendedName>
    <alternativeName>
        <fullName>Angiogenic factor VG5Q</fullName>
        <shortName>mVG5Q</shortName>
    </alternativeName>
</protein>
<name>AGGF1_MOUSE</name>
<feature type="initiator methionine" description="Removed" evidence="2">
    <location>
        <position position="1"/>
    </location>
</feature>
<feature type="chain" id="PRO_0000064496" description="Angiogenic factor with G patch and FHA domains 1">
    <location>
        <begin position="2"/>
        <end position="711"/>
    </location>
</feature>
<feature type="domain" description="FHA" evidence="4">
    <location>
        <begin position="431"/>
        <end position="484"/>
    </location>
</feature>
<feature type="domain" description="G-patch" evidence="5">
    <location>
        <begin position="616"/>
        <end position="662"/>
    </location>
</feature>
<feature type="region of interest" description="Disordered" evidence="6">
    <location>
        <begin position="1"/>
        <end position="23"/>
    </location>
</feature>
<feature type="region of interest" description="Disordered" evidence="6">
    <location>
        <begin position="137"/>
        <end position="184"/>
    </location>
</feature>
<feature type="region of interest" description="Disordered" evidence="6">
    <location>
        <begin position="260"/>
        <end position="297"/>
    </location>
</feature>
<feature type="region of interest" description="Disordered" evidence="6">
    <location>
        <begin position="311"/>
        <end position="400"/>
    </location>
</feature>
<feature type="region of interest" description="Disordered" evidence="6">
    <location>
        <begin position="579"/>
        <end position="623"/>
    </location>
</feature>
<feature type="region of interest" description="Disordered" evidence="6">
    <location>
        <begin position="690"/>
        <end position="711"/>
    </location>
</feature>
<feature type="coiled-coil region" evidence="3">
    <location>
        <begin position="19"/>
        <end position="85"/>
    </location>
</feature>
<feature type="compositionally biased region" description="Pro residues" evidence="6">
    <location>
        <begin position="1"/>
        <end position="19"/>
    </location>
</feature>
<feature type="compositionally biased region" description="Polar residues" evidence="6">
    <location>
        <begin position="167"/>
        <end position="176"/>
    </location>
</feature>
<feature type="compositionally biased region" description="Basic residues" evidence="6">
    <location>
        <begin position="270"/>
        <end position="279"/>
    </location>
</feature>
<feature type="compositionally biased region" description="Basic and acidic residues" evidence="6">
    <location>
        <begin position="287"/>
        <end position="297"/>
    </location>
</feature>
<feature type="compositionally biased region" description="Acidic residues" evidence="6">
    <location>
        <begin position="361"/>
        <end position="370"/>
    </location>
</feature>
<feature type="compositionally biased region" description="Basic and acidic residues" evidence="6">
    <location>
        <begin position="374"/>
        <end position="391"/>
    </location>
</feature>
<feature type="compositionally biased region" description="Basic and acidic residues" evidence="6">
    <location>
        <begin position="579"/>
        <end position="606"/>
    </location>
</feature>
<feature type="compositionally biased region" description="Basic and acidic residues" evidence="6">
    <location>
        <begin position="613"/>
        <end position="623"/>
    </location>
</feature>
<feature type="compositionally biased region" description="Basic and acidic residues" evidence="6">
    <location>
        <begin position="690"/>
        <end position="699"/>
    </location>
</feature>
<feature type="modified residue" description="N-acetylalanine" evidence="2">
    <location>
        <position position="2"/>
    </location>
</feature>
<feature type="modified residue" description="Phosphoserine" evidence="2">
    <location>
        <position position="7"/>
    </location>
</feature>
<feature type="modified residue" description="Phosphoserine" evidence="2">
    <location>
        <position position="12"/>
    </location>
</feature>
<feature type="modified residue" description="Phosphoserine" evidence="2">
    <location>
        <position position="344"/>
    </location>
</feature>
<feature type="modified residue" description="N6-acetyllysine" evidence="2">
    <location>
        <position position="661"/>
    </location>
</feature>
<feature type="sequence conflict" description="In Ref. 2; AK009533." evidence="7" ref="2">
    <original>S</original>
    <variation>C</variation>
    <location>
        <position position="247"/>
    </location>
</feature>
<feature type="sequence conflict" description="In Ref. 3; AAH27286." evidence="7" ref="3">
    <original>V</original>
    <variation>A</variation>
    <location>
        <position position="448"/>
    </location>
</feature>
<feature type="sequence conflict" description="In Ref. 3; AAH27286." evidence="7" ref="3">
    <original>L</original>
    <variation>M</variation>
    <location>
        <position position="509"/>
    </location>
</feature>
<feature type="sequence conflict" description="In Ref. 3; AAH27286." evidence="7" ref="3">
    <original>A</original>
    <variation>V</variation>
    <location>
        <position position="578"/>
    </location>
</feature>
<feature type="sequence conflict" description="In Ref. 3; AAH27286." evidence="7" ref="3">
    <original>R</original>
    <variation>Q</variation>
    <location>
        <position position="631"/>
    </location>
</feature>
<gene>
    <name type="primary">Aggf1</name>
    <name type="synonym">Vg5q</name>
</gene>
<accession>Q7TN31</accession>
<accession>Q8R2S6</accession>
<accession>Q9CQR9</accession>
<accession>Q9CU87</accession>
<accession>Q9D768</accession>
<sequence length="711" mass="79445">MASEAPSPPSPSPPPPASPEPELAQLRRKVEKLERELRSCRRQVREVEKLLQHTERLYRNAESDNQELRTQVEELSKILHCGKNEDNPKSDVEVQTESQAPWAISDYYYQTCYNDDSLPSKETELCVQQSQCAQASALDPQDESHIDSGSYAGADATEGVSHRQEDAVTSDSQESVSALAEGPALEGSSLAESLRAAAEAAVSQTGFTYDESTGLYFDHSTGFYYDSENQLYYDPSTGIYYYCDVESGRYQFHSRVDLQPYQTSSTKPNRERRLKKRRKEPGFYTANEEKDLSSEDQKVCSVEYINCSEDEHSGNVKKKARTDTSHKSSPLQLTVAVSGDTVESPGDDNSASSKDERIGESESEPEEGEITDSQSEKSYDGDSSSGDRETSEESDDEDEERIWPPCIRVIVIRSPVLQMGSLFIITAVSPATIGREKDMEHTVRIPEVAVSKFHAEVYFDHDLQSYVLVDQGSQNGTIVNGKQILQPKTKCDPYVLEHGDEVKIGETVLSFHIHPGSETCDGCEPGQVRAHLRLDRKDEPLVGPALSKEEKELERRKALKKIRVKYGLQNTDYEAEKALKNPKYKDRAGKRREQVGSEGTFQRDDAPASVHSEITDSNKGRKMLEKMGWKRGEGLGKDGGGMKTPIQLQLRRTHAGLGTGKLSSIDDVHLIQNKSKKHWDKARERFAETFTENKPRKETPGAVPWVTGTAE</sequence>